<gene>
    <name type="primary">Sgcg</name>
</gene>
<dbReference type="EMBL" id="AB024922">
    <property type="protein sequence ID" value="BAA83493.1"/>
    <property type="molecule type" value="mRNA"/>
</dbReference>
<dbReference type="CCDS" id="CCDS27181.1"/>
<dbReference type="RefSeq" id="NP_036022.1">
    <property type="nucleotide sequence ID" value="NM_011892.3"/>
</dbReference>
<dbReference type="RefSeq" id="XP_006519075.1">
    <property type="nucleotide sequence ID" value="XM_006519012.2"/>
</dbReference>
<dbReference type="RefSeq" id="XP_036014490.1">
    <property type="nucleotide sequence ID" value="XM_036158597.1"/>
</dbReference>
<dbReference type="PDB" id="8YT8">
    <property type="method" value="EM"/>
    <property type="resolution" value="3.50 A"/>
    <property type="chains" value="G=27-291"/>
</dbReference>
<dbReference type="PDBsum" id="8YT8"/>
<dbReference type="EMDB" id="EMD-39568"/>
<dbReference type="SMR" id="P82348"/>
<dbReference type="BioGRID" id="204866">
    <property type="interactions" value="3"/>
</dbReference>
<dbReference type="CORUM" id="P82348"/>
<dbReference type="FunCoup" id="P82348">
    <property type="interactions" value="154"/>
</dbReference>
<dbReference type="STRING" id="10090.ENSMUSP00000077106"/>
<dbReference type="GlyCosmos" id="P82348">
    <property type="glycosylation" value="1 site, No reported glycans"/>
</dbReference>
<dbReference type="GlyGen" id="P82348">
    <property type="glycosylation" value="2 sites, 1 O-linked glycan (1 site)"/>
</dbReference>
<dbReference type="iPTMnet" id="P82348"/>
<dbReference type="PhosphoSitePlus" id="P82348"/>
<dbReference type="jPOST" id="P82348"/>
<dbReference type="PaxDb" id="10090-ENSMUSP00000077106"/>
<dbReference type="ProteomicsDB" id="256978"/>
<dbReference type="Antibodypedia" id="2309">
    <property type="antibodies" value="143 antibodies from 28 providers"/>
</dbReference>
<dbReference type="DNASU" id="24053"/>
<dbReference type="Ensembl" id="ENSMUST00000077954.13">
    <property type="protein sequence ID" value="ENSMUSP00000077106.6"/>
    <property type="gene ID" value="ENSMUSG00000035296.15"/>
</dbReference>
<dbReference type="Ensembl" id="ENSMUST00000121148.8">
    <property type="protein sequence ID" value="ENSMUSP00000112576.2"/>
    <property type="gene ID" value="ENSMUSG00000035296.15"/>
</dbReference>
<dbReference type="GeneID" id="24053"/>
<dbReference type="KEGG" id="mmu:24053"/>
<dbReference type="UCSC" id="uc007ufs.1">
    <property type="organism name" value="mouse"/>
</dbReference>
<dbReference type="AGR" id="MGI:1346524"/>
<dbReference type="CTD" id="6445"/>
<dbReference type="MGI" id="MGI:1346524">
    <property type="gene designation" value="Sgcg"/>
</dbReference>
<dbReference type="VEuPathDB" id="HostDB:ENSMUSG00000035296"/>
<dbReference type="eggNOG" id="KOG3950">
    <property type="taxonomic scope" value="Eukaryota"/>
</dbReference>
<dbReference type="GeneTree" id="ENSGT00940000159187"/>
<dbReference type="HOGENOM" id="CLU_043450_0_0_1"/>
<dbReference type="InParanoid" id="P82348"/>
<dbReference type="OMA" id="VMWFSPV"/>
<dbReference type="OrthoDB" id="5973998at2759"/>
<dbReference type="PhylomeDB" id="P82348"/>
<dbReference type="TreeFam" id="TF313538"/>
<dbReference type="Reactome" id="R-MMU-9913351">
    <property type="pathway name" value="Formation of the dystrophin-glycoprotein complex (DGC)"/>
</dbReference>
<dbReference type="BioGRID-ORCS" id="24053">
    <property type="hits" value="1 hit in 80 CRISPR screens"/>
</dbReference>
<dbReference type="ChiTaRS" id="Sgcg">
    <property type="organism name" value="mouse"/>
</dbReference>
<dbReference type="PRO" id="PR:P82348"/>
<dbReference type="Proteomes" id="UP000000589">
    <property type="component" value="Chromosome 14"/>
</dbReference>
<dbReference type="RNAct" id="P82348">
    <property type="molecule type" value="protein"/>
</dbReference>
<dbReference type="Bgee" id="ENSMUSG00000035296">
    <property type="expression patterns" value="Expressed in temporalis muscle and 109 other cell types or tissues"/>
</dbReference>
<dbReference type="ExpressionAtlas" id="P82348">
    <property type="expression patterns" value="baseline and differential"/>
</dbReference>
<dbReference type="GO" id="GO:0005737">
    <property type="term" value="C:cytoplasm"/>
    <property type="evidence" value="ECO:0007669"/>
    <property type="project" value="UniProtKB-KW"/>
</dbReference>
<dbReference type="GO" id="GO:0005856">
    <property type="term" value="C:cytoskeleton"/>
    <property type="evidence" value="ECO:0007669"/>
    <property type="project" value="UniProtKB-SubCell"/>
</dbReference>
<dbReference type="GO" id="GO:0016011">
    <property type="term" value="C:dystroglycan complex"/>
    <property type="evidence" value="ECO:0000314"/>
    <property type="project" value="MGI"/>
</dbReference>
<dbReference type="GO" id="GO:0005886">
    <property type="term" value="C:plasma membrane"/>
    <property type="evidence" value="ECO:0000314"/>
    <property type="project" value="MGI"/>
</dbReference>
<dbReference type="GO" id="GO:0016012">
    <property type="term" value="C:sarcoglycan complex"/>
    <property type="evidence" value="ECO:0000314"/>
    <property type="project" value="MGI"/>
</dbReference>
<dbReference type="GO" id="GO:0042383">
    <property type="term" value="C:sarcolemma"/>
    <property type="evidence" value="ECO:0000314"/>
    <property type="project" value="MGI"/>
</dbReference>
<dbReference type="GO" id="GO:0010467">
    <property type="term" value="P:gene expression"/>
    <property type="evidence" value="ECO:0000315"/>
    <property type="project" value="MGI"/>
</dbReference>
<dbReference type="GO" id="GO:0061024">
    <property type="term" value="P:membrane organization"/>
    <property type="evidence" value="ECO:0000304"/>
    <property type="project" value="MGI"/>
</dbReference>
<dbReference type="InterPro" id="IPR006875">
    <property type="entry name" value="Sarcoglycan"/>
</dbReference>
<dbReference type="InterPro" id="IPR039972">
    <property type="entry name" value="Sarcoglycan_gamma/delta/zeta"/>
</dbReference>
<dbReference type="PANTHER" id="PTHR12939:SF4">
    <property type="entry name" value="GAMMA-SARCOGLYCAN"/>
    <property type="match status" value="1"/>
</dbReference>
<dbReference type="PANTHER" id="PTHR12939">
    <property type="entry name" value="SARCOGLYCAN"/>
    <property type="match status" value="1"/>
</dbReference>
<dbReference type="Pfam" id="PF04790">
    <property type="entry name" value="Sarcoglycan_1"/>
    <property type="match status" value="1"/>
</dbReference>
<comment type="function">
    <text>Component of the sarcoglycan complex, a subcomplex of the dystrophin-glycoprotein complex which forms a link between the F-actin cytoskeleton and the extracellular matrix.</text>
</comment>
<comment type="subunit">
    <text evidence="2 3">Interacts with the syntrophin SNTA1 and FLNC. Cross-link to form 2 major subcomplexes: one consisting of SGCB, SGCD and SGCG and the other consisting of SGCB and SGCD. The association between SGCB and SGCG is particularly strong while SGCA is loosely associated with the other sarcoglycans.</text>
</comment>
<comment type="subcellular location">
    <subcellularLocation>
        <location evidence="3">Cell membrane</location>
        <location evidence="3">Sarcolemma</location>
        <topology evidence="3">Single-pass type II membrane protein</topology>
    </subcellularLocation>
    <subcellularLocation>
        <location evidence="3">Cytoplasm</location>
        <location evidence="3">Cytoskeleton</location>
    </subcellularLocation>
</comment>
<comment type="tissue specificity">
    <text>Most strongly expressed in skeletal and heart muscle. Also detected in proliferating myoblasts.</text>
</comment>
<comment type="similarity">
    <text evidence="4">Belongs to the sarcoglycan beta/delta/gamma/zeta family.</text>
</comment>
<feature type="chain" id="PRO_0000175250" description="Gamma-sarcoglycan">
    <location>
        <begin position="1"/>
        <end position="291"/>
    </location>
</feature>
<feature type="topological domain" description="Cytoplasmic" evidence="1">
    <location>
        <begin position="1"/>
        <end position="37"/>
    </location>
</feature>
<feature type="transmembrane region" description="Helical; Signal-anchor for type II membrane protein" evidence="1">
    <location>
        <begin position="38"/>
        <end position="58"/>
    </location>
</feature>
<feature type="topological domain" description="Extracellular" evidence="1">
    <location>
        <begin position="59"/>
        <end position="291"/>
    </location>
</feature>
<feature type="glycosylation site" description="N-linked (GlcNAc...) asparagine" evidence="1">
    <location>
        <position position="110"/>
    </location>
</feature>
<feature type="disulfide bond" evidence="1">
    <location>
        <begin position="265"/>
        <end position="290"/>
    </location>
</feature>
<feature type="disulfide bond" evidence="1">
    <location>
        <begin position="267"/>
        <end position="283"/>
    </location>
</feature>
<name>SGCG_MOUSE</name>
<accession>P82348</accession>
<proteinExistence type="evidence at protein level"/>
<organism>
    <name type="scientific">Mus musculus</name>
    <name type="common">Mouse</name>
    <dbReference type="NCBI Taxonomy" id="10090"/>
    <lineage>
        <taxon>Eukaryota</taxon>
        <taxon>Metazoa</taxon>
        <taxon>Chordata</taxon>
        <taxon>Craniata</taxon>
        <taxon>Vertebrata</taxon>
        <taxon>Euteleostomi</taxon>
        <taxon>Mammalia</taxon>
        <taxon>Eutheria</taxon>
        <taxon>Euarchontoglires</taxon>
        <taxon>Glires</taxon>
        <taxon>Rodentia</taxon>
        <taxon>Myomorpha</taxon>
        <taxon>Muroidea</taxon>
        <taxon>Muridae</taxon>
        <taxon>Murinae</taxon>
        <taxon>Mus</taxon>
        <taxon>Mus</taxon>
    </lineage>
</organism>
<evidence type="ECO:0000255" key="1"/>
<evidence type="ECO:0000269" key="2">
    <source>
    </source>
</evidence>
<evidence type="ECO:0000269" key="3">
    <source>
    </source>
</evidence>
<evidence type="ECO:0000305" key="4"/>
<sequence>MVREQYTTVTEGTHIERPENQHIYKIGIYGWRKRCLYLFVLLLLAILVVNLALTIWILKVMWFSPIGMGHLHVTADGLRLEGESEFLFPLYAKEIRSRVDSSLLLQSTQNVTVSARNSEGEVTGRVKVGAQMVEVQSQHFQINSEDGKPLFSAEEQDVVVGTGRLRVTGPEGALFEHSVETPLVRADPFQDLRLESPTRSLSMDAPRGVHVKANAGKLEALSQMDIILQSSEGVLVLDAETVGLTKLKQGTQGPAGSSNGFYEICACPDGKLYLSMAGEVTTCEEHSHVCL</sequence>
<reference key="1">
    <citation type="journal article" date="1999" name="Biochem. Biophys. Res. Commun.">
        <title>Developmental expression of sarcoglycan gene products in cultured myocytes.</title>
        <authorList>
            <person name="Noguchi S."/>
            <person name="Wakabayashi E."/>
            <person name="Imamura M."/>
            <person name="Yoshida M."/>
            <person name="Ozawa E."/>
        </authorList>
    </citation>
    <scope>NUCLEOTIDE SEQUENCE [MRNA]</scope>
    <source>
        <tissue>Skeletal muscle</tissue>
    </source>
</reference>
<reference key="2">
    <citation type="journal article" date="1995" name="Biochemistry">
        <title>Interactions between dystrophin glycoprotein complex proteins.</title>
        <authorList>
            <person name="Madhavan R."/>
            <person name="Jarrett H.W."/>
        </authorList>
    </citation>
    <scope>INTERACTION WITH SNTA1</scope>
</reference>
<reference key="3">
    <citation type="journal article" date="1998" name="J. Cell Biol.">
        <title>Molecular organization of sarcoglycan complex in mouse myotubes in culture.</title>
        <authorList>
            <person name="Chan Y.-M."/>
            <person name="Boennemann C.G."/>
            <person name="Lidov H.G.W."/>
            <person name="Kunkel L.M."/>
        </authorList>
    </citation>
    <scope>SUBCELLULAR LOCATION</scope>
    <scope>SUBUNIT</scope>
    <scope>DISULFIDE BONDS</scope>
</reference>
<reference key="4">
    <citation type="journal article" date="2010" name="Cell">
        <title>A tissue-specific atlas of mouse protein phosphorylation and expression.</title>
        <authorList>
            <person name="Huttlin E.L."/>
            <person name="Jedrychowski M.P."/>
            <person name="Elias J.E."/>
            <person name="Goswami T."/>
            <person name="Rad R."/>
            <person name="Beausoleil S.A."/>
            <person name="Villen J."/>
            <person name="Haas W."/>
            <person name="Sowa M.E."/>
            <person name="Gygi S.P."/>
        </authorList>
    </citation>
    <scope>IDENTIFICATION BY MASS SPECTROMETRY [LARGE SCALE ANALYSIS]</scope>
    <source>
        <tissue>Heart</tissue>
    </source>
</reference>
<keyword id="KW-0002">3D-structure</keyword>
<keyword id="KW-1003">Cell membrane</keyword>
<keyword id="KW-0963">Cytoplasm</keyword>
<keyword id="KW-0206">Cytoskeleton</keyword>
<keyword id="KW-1015">Disulfide bond</keyword>
<keyword id="KW-0325">Glycoprotein</keyword>
<keyword id="KW-0472">Membrane</keyword>
<keyword id="KW-1185">Reference proteome</keyword>
<keyword id="KW-0735">Signal-anchor</keyword>
<keyword id="KW-0812">Transmembrane</keyword>
<keyword id="KW-1133">Transmembrane helix</keyword>
<protein>
    <recommendedName>
        <fullName>Gamma-sarcoglycan</fullName>
        <shortName>Gamma-SG</shortName>
    </recommendedName>
    <alternativeName>
        <fullName>35 kDa dystrophin-associated glycoprotein</fullName>
        <shortName>35DAG</shortName>
    </alternativeName>
</protein>